<accession>O88796</accession>
<evidence type="ECO:0000250" key="1">
    <source>
        <dbReference type="UniProtKB" id="P78346"/>
    </source>
</evidence>
<evidence type="ECO:0000305" key="2"/>
<keyword id="KW-0007">Acetylation</keyword>
<keyword id="KW-0539">Nucleus</keyword>
<keyword id="KW-0597">Phosphoprotein</keyword>
<keyword id="KW-1185">Reference proteome</keyword>
<keyword id="KW-0698">rRNA processing</keyword>
<keyword id="KW-0819">tRNA processing</keyword>
<protein>
    <recommendedName>
        <fullName>Ribonuclease P protein subunit p30</fullName>
        <shortName>RNaseP protein p30</shortName>
    </recommendedName>
    <alternativeName>
        <fullName>RNase P subunit 2</fullName>
    </alternativeName>
</protein>
<proteinExistence type="evidence at protein level"/>
<organism>
    <name type="scientific">Mus musculus</name>
    <name type="common">Mouse</name>
    <dbReference type="NCBI Taxonomy" id="10090"/>
    <lineage>
        <taxon>Eukaryota</taxon>
        <taxon>Metazoa</taxon>
        <taxon>Chordata</taxon>
        <taxon>Craniata</taxon>
        <taxon>Vertebrata</taxon>
        <taxon>Euteleostomi</taxon>
        <taxon>Mammalia</taxon>
        <taxon>Eutheria</taxon>
        <taxon>Euarchontoglires</taxon>
        <taxon>Glires</taxon>
        <taxon>Rodentia</taxon>
        <taxon>Myomorpha</taxon>
        <taxon>Muroidea</taxon>
        <taxon>Muridae</taxon>
        <taxon>Murinae</taxon>
        <taxon>Mus</taxon>
        <taxon>Mus</taxon>
    </lineage>
</organism>
<dbReference type="EMBL" id="U95123">
    <property type="protein sequence ID" value="AAC24115.1"/>
    <property type="molecule type" value="mRNA"/>
</dbReference>
<dbReference type="CCDS" id="CCDS29770.1"/>
<dbReference type="RefSeq" id="NP_062301.3">
    <property type="nucleotide sequence ID" value="NM_019428.3"/>
</dbReference>
<dbReference type="SMR" id="O88796"/>
<dbReference type="BioGRID" id="207622">
    <property type="interactions" value="31"/>
</dbReference>
<dbReference type="FunCoup" id="O88796">
    <property type="interactions" value="1733"/>
</dbReference>
<dbReference type="IntAct" id="O88796">
    <property type="interactions" value="2"/>
</dbReference>
<dbReference type="MINT" id="O88796"/>
<dbReference type="STRING" id="10090.ENSMUSP00000025714"/>
<dbReference type="GlyGen" id="O88796">
    <property type="glycosylation" value="1 site, 1 O-linked glycan (1 site)"/>
</dbReference>
<dbReference type="iPTMnet" id="O88796"/>
<dbReference type="PhosphoSitePlus" id="O88796"/>
<dbReference type="jPOST" id="O88796"/>
<dbReference type="PaxDb" id="10090-ENSMUSP00000025714"/>
<dbReference type="PeptideAtlas" id="O88796"/>
<dbReference type="ProteomicsDB" id="300485"/>
<dbReference type="Pumba" id="O88796"/>
<dbReference type="Antibodypedia" id="16338">
    <property type="antibodies" value="88 antibodies from 22 providers"/>
</dbReference>
<dbReference type="DNASU" id="54364"/>
<dbReference type="Ensembl" id="ENSMUST00000025714.9">
    <property type="protein sequence ID" value="ENSMUSP00000025714.8"/>
    <property type="gene ID" value="ENSMUSG00000024800.9"/>
</dbReference>
<dbReference type="GeneID" id="54364"/>
<dbReference type="KEGG" id="mmu:54364"/>
<dbReference type="UCSC" id="uc008hhg.2">
    <property type="organism name" value="mouse"/>
</dbReference>
<dbReference type="AGR" id="MGI:1859683"/>
<dbReference type="CTD" id="10556"/>
<dbReference type="MGI" id="MGI:1859683">
    <property type="gene designation" value="Rpp30"/>
</dbReference>
<dbReference type="VEuPathDB" id="HostDB:ENSMUSG00000024800"/>
<dbReference type="eggNOG" id="KOG2363">
    <property type="taxonomic scope" value="Eukaryota"/>
</dbReference>
<dbReference type="GeneTree" id="ENSGT00390000000883"/>
<dbReference type="HOGENOM" id="CLU_048451_2_1_1"/>
<dbReference type="InParanoid" id="O88796"/>
<dbReference type="OMA" id="CYGPGIT"/>
<dbReference type="OrthoDB" id="17948at2759"/>
<dbReference type="PhylomeDB" id="O88796"/>
<dbReference type="TreeFam" id="TF106113"/>
<dbReference type="Reactome" id="R-MMU-6791226">
    <property type="pathway name" value="Major pathway of rRNA processing in the nucleolus and cytosol"/>
</dbReference>
<dbReference type="BioGRID-ORCS" id="54364">
    <property type="hits" value="25 hits in 79 CRISPR screens"/>
</dbReference>
<dbReference type="PRO" id="PR:O88796"/>
<dbReference type="Proteomes" id="UP000000589">
    <property type="component" value="Chromosome 19"/>
</dbReference>
<dbReference type="RNAct" id="O88796">
    <property type="molecule type" value="protein"/>
</dbReference>
<dbReference type="Bgee" id="ENSMUSG00000024800">
    <property type="expression patterns" value="Expressed in spermatocyte and 278 other cell types or tissues"/>
</dbReference>
<dbReference type="GO" id="GO:0030681">
    <property type="term" value="C:multimeric ribonuclease P complex"/>
    <property type="evidence" value="ECO:0007669"/>
    <property type="project" value="Ensembl"/>
</dbReference>
<dbReference type="GO" id="GO:0005730">
    <property type="term" value="C:nucleolus"/>
    <property type="evidence" value="ECO:0007669"/>
    <property type="project" value="UniProtKB-SubCell"/>
</dbReference>
<dbReference type="GO" id="GO:0000172">
    <property type="term" value="C:ribonuclease MRP complex"/>
    <property type="evidence" value="ECO:0007669"/>
    <property type="project" value="Ensembl"/>
</dbReference>
<dbReference type="GO" id="GO:0004526">
    <property type="term" value="F:ribonuclease P activity"/>
    <property type="evidence" value="ECO:0007669"/>
    <property type="project" value="UniProtKB-EC"/>
</dbReference>
<dbReference type="GO" id="GO:0033204">
    <property type="term" value="F:ribonuclease P RNA binding"/>
    <property type="evidence" value="ECO:0007669"/>
    <property type="project" value="Ensembl"/>
</dbReference>
<dbReference type="GO" id="GO:0006364">
    <property type="term" value="P:rRNA processing"/>
    <property type="evidence" value="ECO:0007669"/>
    <property type="project" value="UniProtKB-KW"/>
</dbReference>
<dbReference type="GO" id="GO:0001682">
    <property type="term" value="P:tRNA 5'-leader removal"/>
    <property type="evidence" value="ECO:0007669"/>
    <property type="project" value="Ensembl"/>
</dbReference>
<dbReference type="FunFam" id="3.20.20.140:FF:000031">
    <property type="entry name" value="ribonuclease P protein subunit p30"/>
    <property type="match status" value="1"/>
</dbReference>
<dbReference type="Gene3D" id="3.20.20.140">
    <property type="entry name" value="Metal-dependent hydrolases"/>
    <property type="match status" value="1"/>
</dbReference>
<dbReference type="InterPro" id="IPR016195">
    <property type="entry name" value="Pol/histidinol_Pase-like"/>
</dbReference>
<dbReference type="InterPro" id="IPR002738">
    <property type="entry name" value="RNase_P_p30"/>
</dbReference>
<dbReference type="PANTHER" id="PTHR13031:SF0">
    <property type="entry name" value="RIBONUCLEASE P PROTEIN SUBUNIT P30"/>
    <property type="match status" value="1"/>
</dbReference>
<dbReference type="PANTHER" id="PTHR13031">
    <property type="entry name" value="RIBONUCLEASE P SUBUNIT P30"/>
    <property type="match status" value="1"/>
</dbReference>
<dbReference type="Pfam" id="PF01876">
    <property type="entry name" value="RNase_P_p30"/>
    <property type="match status" value="1"/>
</dbReference>
<dbReference type="SUPFAM" id="SSF89550">
    <property type="entry name" value="PHP domain-like"/>
    <property type="match status" value="1"/>
</dbReference>
<comment type="function">
    <text evidence="1">Component of ribonuclease P, a ribonucleoprotein complex that generates mature tRNA molecules by cleaving their 5'-ends. Also a component of the MRP ribonuclease complex, which cleaves pre-rRNA sequences.</text>
</comment>
<comment type="subunit">
    <text evidence="1">Component of nuclear RNase P and RNase MRP ribonucleoproteins. RNase P consists of a catalytic RNA moiety and about 10 protein subunits; POP1, POP4, POP5, POP7, RPP14, RPP21, RPP25, RPP30, RPP38 and RPP40. Within the RNase P complex, POP1, POP7 and RPP25 form the 'finger' subcomplex, POP5, RPP14, RPP40 and homodimeric RPP30 form the 'palm' subcomplex, and RPP21, POP4 and RPP38 form the 'wrist' subcomplex. All subunits of the RNase P complex interact with the catalytic RNA. Several subunits of RNase P are also part of the RNase MRP complex. RNase MRP consists of a catalytic RNA moiety and about 8 protein subunits; POP1, POP7, RPP25, RPP30, RPP38, RPP40 and possibly also POP4 and POP5.</text>
</comment>
<comment type="subcellular location">
    <subcellularLocation>
        <location evidence="2">Nucleus</location>
        <location evidence="2">Nucleolus</location>
    </subcellularLocation>
</comment>
<comment type="similarity">
    <text evidence="2">Belongs to the eukaryotic/archaeal RNase P protein component 3 family.</text>
</comment>
<feature type="initiator methionine" description="Removed" evidence="1">
    <location>
        <position position="1"/>
    </location>
</feature>
<feature type="chain" id="PRO_0000140032" description="Ribonuclease P protein subunit p30">
    <location>
        <begin position="2"/>
        <end position="268"/>
    </location>
</feature>
<feature type="modified residue" description="N-acetylalanine" evidence="1">
    <location>
        <position position="2"/>
    </location>
</feature>
<feature type="modified residue" description="Phosphoserine" evidence="1">
    <location>
        <position position="251"/>
    </location>
</feature>
<sequence length="268" mass="29473">MAAFADLDLRAGSDLKALRGLVETAAHLGYSVVAINHIVDFKEKKREIEKPIAVSELFTTLPIVQGKSRPIKILTRLTIIVTDPAHCNVLRATSSRVRLYDIVAVFPKTEKLFHVACTHLDVDLVCITVTEKLPFYFKRPPVNVAIERGLGFELVYGPAIRDATMRRYTISNALNLMQICKGKNVILSSAAERPLEIRGPYDVANLGLLFGLSENDGKAAVSTNCRAVFLHGETRKTAFGIISTVKKPRPSEADDESLPVCKKAKCEG</sequence>
<reference key="1">
    <citation type="journal article" date="1998" name="RNA">
        <title>Autoantigenic properties of some protein subunits of catalytically active complexes of human ribonuclease P.</title>
        <authorList>
            <person name="Jarrous N."/>
            <person name="Eder P.S."/>
            <person name="Guerrier-Takada C."/>
            <person name="Hoog C."/>
            <person name="Altman S."/>
        </authorList>
    </citation>
    <scope>NUCLEOTIDE SEQUENCE [MRNA]</scope>
</reference>
<reference key="2">
    <citation type="journal article" date="2010" name="Cell">
        <title>A tissue-specific atlas of mouse protein phosphorylation and expression.</title>
        <authorList>
            <person name="Huttlin E.L."/>
            <person name="Jedrychowski M.P."/>
            <person name="Elias J.E."/>
            <person name="Goswami T."/>
            <person name="Rad R."/>
            <person name="Beausoleil S.A."/>
            <person name="Villen J."/>
            <person name="Haas W."/>
            <person name="Sowa M.E."/>
            <person name="Gygi S.P."/>
        </authorList>
    </citation>
    <scope>IDENTIFICATION BY MASS SPECTROMETRY [LARGE SCALE ANALYSIS]</scope>
    <source>
        <tissue>Kidney</tissue>
        <tissue>Spleen</tissue>
        <tissue>Testis</tissue>
    </source>
</reference>
<gene>
    <name type="primary">Rpp30</name>
    <name type="synonym">Rnasep2</name>
</gene>
<name>RPP30_MOUSE</name>